<feature type="chain" id="PRO_0000134374" description="MEMO1 family protein TM_0087">
    <location>
        <begin position="1"/>
        <end position="277"/>
    </location>
</feature>
<name>Y087_THEMA</name>
<protein>
    <recommendedName>
        <fullName evidence="1">MEMO1 family protein TM_0087</fullName>
    </recommendedName>
</protein>
<sequence length="277" mass="30476">MKRKPAVAGLFYPSRRDELIEQIRMCFLDKRIGPGKLPGPVETKLQNPIGLVSPHAGYIYSGPVAAWGFLEAVKFGEPSVVVIIGPNHTGLGRPVGVWPEGEWETPLGTVPVNERAVEIVLSNSRYAEEDFMSHIREHSIEVQIPFLQFVFGEVSIVPICLMDQSPAVAEDLASALAKLVAEFPGVLIIASTDLNHYEDQRTTLRKDSYIIEAIEGMDPSLLYEYLVREDISMCGYGGVATLLNMDFENVRILKHATSGDVSGDTLEVVGYLSAILF</sequence>
<comment type="similarity">
    <text evidence="1">Belongs to the MEMO1 family.</text>
</comment>
<dbReference type="EMBL" id="AE000512">
    <property type="protein sequence ID" value="AAD35181.1"/>
    <property type="molecule type" value="Genomic_DNA"/>
</dbReference>
<dbReference type="PIR" id="A72420">
    <property type="entry name" value="A72420"/>
</dbReference>
<dbReference type="RefSeq" id="NP_227903.1">
    <property type="nucleotide sequence ID" value="NC_000853.1"/>
</dbReference>
<dbReference type="RefSeq" id="WP_004082616.1">
    <property type="nucleotide sequence ID" value="NC_000853.1"/>
</dbReference>
<dbReference type="SMR" id="Q9WXU2"/>
<dbReference type="STRING" id="243274.TM_0087"/>
<dbReference type="PaxDb" id="243274-THEMA_04370"/>
<dbReference type="EnsemblBacteria" id="AAD35181">
    <property type="protein sequence ID" value="AAD35181"/>
    <property type="gene ID" value="TM_0087"/>
</dbReference>
<dbReference type="KEGG" id="tma:TM0087"/>
<dbReference type="KEGG" id="tmi:THEMA_04370"/>
<dbReference type="KEGG" id="tmm:Tmari_0084"/>
<dbReference type="KEGG" id="tmw:THMA_0083"/>
<dbReference type="eggNOG" id="COG1355">
    <property type="taxonomic scope" value="Bacteria"/>
</dbReference>
<dbReference type="InParanoid" id="Q9WXU2"/>
<dbReference type="OrthoDB" id="9785549at2"/>
<dbReference type="Proteomes" id="UP000008183">
    <property type="component" value="Chromosome"/>
</dbReference>
<dbReference type="CDD" id="cd07361">
    <property type="entry name" value="MEMO_like"/>
    <property type="match status" value="1"/>
</dbReference>
<dbReference type="Gene3D" id="3.40.830.10">
    <property type="entry name" value="LigB-like"/>
    <property type="match status" value="1"/>
</dbReference>
<dbReference type="HAMAP" id="MF_00055">
    <property type="entry name" value="MEMO1"/>
    <property type="match status" value="1"/>
</dbReference>
<dbReference type="InterPro" id="IPR002737">
    <property type="entry name" value="MEMO1_fam"/>
</dbReference>
<dbReference type="NCBIfam" id="TIGR04336">
    <property type="entry name" value="AmmeMemoSam_B"/>
    <property type="match status" value="1"/>
</dbReference>
<dbReference type="PANTHER" id="PTHR11060">
    <property type="entry name" value="PROTEIN MEMO1"/>
    <property type="match status" value="1"/>
</dbReference>
<dbReference type="PANTHER" id="PTHR11060:SF0">
    <property type="entry name" value="PROTEIN MEMO1"/>
    <property type="match status" value="1"/>
</dbReference>
<dbReference type="Pfam" id="PF01875">
    <property type="entry name" value="Memo"/>
    <property type="match status" value="1"/>
</dbReference>
<reference key="1">
    <citation type="journal article" date="1999" name="Nature">
        <title>Evidence for lateral gene transfer between Archaea and Bacteria from genome sequence of Thermotoga maritima.</title>
        <authorList>
            <person name="Nelson K.E."/>
            <person name="Clayton R.A."/>
            <person name="Gill S.R."/>
            <person name="Gwinn M.L."/>
            <person name="Dodson R.J."/>
            <person name="Haft D.H."/>
            <person name="Hickey E.K."/>
            <person name="Peterson J.D."/>
            <person name="Nelson W.C."/>
            <person name="Ketchum K.A."/>
            <person name="McDonald L.A."/>
            <person name="Utterback T.R."/>
            <person name="Malek J.A."/>
            <person name="Linher K.D."/>
            <person name="Garrett M.M."/>
            <person name="Stewart A.M."/>
            <person name="Cotton M.D."/>
            <person name="Pratt M.S."/>
            <person name="Phillips C.A."/>
            <person name="Richardson D.L."/>
            <person name="Heidelberg J.F."/>
            <person name="Sutton G.G."/>
            <person name="Fleischmann R.D."/>
            <person name="Eisen J.A."/>
            <person name="White O."/>
            <person name="Salzberg S.L."/>
            <person name="Smith H.O."/>
            <person name="Venter J.C."/>
            <person name="Fraser C.M."/>
        </authorList>
    </citation>
    <scope>NUCLEOTIDE SEQUENCE [LARGE SCALE GENOMIC DNA]</scope>
    <source>
        <strain>ATCC 43589 / DSM 3109 / JCM 10099 / NBRC 100826 / MSB8</strain>
    </source>
</reference>
<evidence type="ECO:0000255" key="1">
    <source>
        <dbReference type="HAMAP-Rule" id="MF_00055"/>
    </source>
</evidence>
<proteinExistence type="inferred from homology"/>
<keyword id="KW-1185">Reference proteome</keyword>
<accession>Q9WXU2</accession>
<organism>
    <name type="scientific">Thermotoga maritima (strain ATCC 43589 / DSM 3109 / JCM 10099 / NBRC 100826 / MSB8)</name>
    <dbReference type="NCBI Taxonomy" id="243274"/>
    <lineage>
        <taxon>Bacteria</taxon>
        <taxon>Thermotogati</taxon>
        <taxon>Thermotogota</taxon>
        <taxon>Thermotogae</taxon>
        <taxon>Thermotogales</taxon>
        <taxon>Thermotogaceae</taxon>
        <taxon>Thermotoga</taxon>
    </lineage>
</organism>
<gene>
    <name type="ordered locus">TM_0087</name>
</gene>